<dbReference type="EC" id="3.4.24.-"/>
<dbReference type="EMBL" id="CP000627">
    <property type="protein sequence ID" value="ABQ22076.1"/>
    <property type="status" value="ALT_INIT"/>
    <property type="molecule type" value="Genomic_DNA"/>
</dbReference>
<dbReference type="EMBL" id="CP001235">
    <property type="protein sequence ID" value="ACP08853.1"/>
    <property type="status" value="ALT_INIT"/>
    <property type="molecule type" value="Genomic_DNA"/>
</dbReference>
<dbReference type="EMBL" id="U12265">
    <property type="protein sequence ID" value="AAA68630.1"/>
    <property type="status" value="ALT_FRAME"/>
    <property type="molecule type" value="Genomic_DNA"/>
</dbReference>
<dbReference type="SMR" id="A5F398"/>
<dbReference type="KEGG" id="vco:VC0395_A0345"/>
<dbReference type="KEGG" id="vcr:VC395_0837"/>
<dbReference type="PATRIC" id="fig|345073.21.peg.808"/>
<dbReference type="eggNOG" id="ENOG502Z7RH">
    <property type="taxonomic scope" value="Bacteria"/>
</dbReference>
<dbReference type="HOGENOM" id="CLU_008787_0_0_6"/>
<dbReference type="Proteomes" id="UP000000249">
    <property type="component" value="Chromosome 2"/>
</dbReference>
<dbReference type="GO" id="GO:0005886">
    <property type="term" value="C:plasma membrane"/>
    <property type="evidence" value="ECO:0007669"/>
    <property type="project" value="UniProtKB-SubCell"/>
</dbReference>
<dbReference type="GO" id="GO:0046872">
    <property type="term" value="F:metal ion binding"/>
    <property type="evidence" value="ECO:0007669"/>
    <property type="project" value="UniProtKB-KW"/>
</dbReference>
<dbReference type="GO" id="GO:0004222">
    <property type="term" value="F:metalloendopeptidase activity"/>
    <property type="evidence" value="ECO:0007669"/>
    <property type="project" value="InterPro"/>
</dbReference>
<dbReference type="GO" id="GO:0006508">
    <property type="term" value="P:proteolysis"/>
    <property type="evidence" value="ECO:0007669"/>
    <property type="project" value="UniProtKB-KW"/>
</dbReference>
<dbReference type="CDD" id="cd00063">
    <property type="entry name" value="FN3"/>
    <property type="match status" value="1"/>
</dbReference>
<dbReference type="Gene3D" id="2.60.40.10">
    <property type="entry name" value="Immunoglobulins"/>
    <property type="match status" value="1"/>
</dbReference>
<dbReference type="InterPro" id="IPR051256">
    <property type="entry name" value="Dictomallein"/>
</dbReference>
<dbReference type="InterPro" id="IPR003961">
    <property type="entry name" value="FN3_dom"/>
</dbReference>
<dbReference type="InterPro" id="IPR036116">
    <property type="entry name" value="FN3_sf"/>
</dbReference>
<dbReference type="InterPro" id="IPR013783">
    <property type="entry name" value="Ig-like_fold"/>
</dbReference>
<dbReference type="InterPro" id="IPR019503">
    <property type="entry name" value="Peptidase_M66_dom"/>
</dbReference>
<dbReference type="InterPro" id="IPR022218">
    <property type="entry name" value="TagA_dom"/>
</dbReference>
<dbReference type="PANTHER" id="PTHR39540">
    <property type="match status" value="1"/>
</dbReference>
<dbReference type="PANTHER" id="PTHR39540:SF1">
    <property type="entry name" value="DICTOMALLEIN-1-RELATED"/>
    <property type="match status" value="1"/>
</dbReference>
<dbReference type="Pfam" id="PF00041">
    <property type="entry name" value="fn3"/>
    <property type="match status" value="1"/>
</dbReference>
<dbReference type="Pfam" id="PF10462">
    <property type="entry name" value="Peptidase_M66"/>
    <property type="match status" value="1"/>
</dbReference>
<dbReference type="Pfam" id="PF12561">
    <property type="entry name" value="TagA"/>
    <property type="match status" value="1"/>
</dbReference>
<dbReference type="SMART" id="SM00060">
    <property type="entry name" value="FN3"/>
    <property type="match status" value="1"/>
</dbReference>
<dbReference type="SUPFAM" id="SSF49265">
    <property type="entry name" value="Fibronectin type III"/>
    <property type="match status" value="1"/>
</dbReference>
<dbReference type="PROSITE" id="PS50853">
    <property type="entry name" value="FN3"/>
    <property type="match status" value="1"/>
</dbReference>
<dbReference type="PROSITE" id="PS51694">
    <property type="entry name" value="PEPTIDASE_M66"/>
    <property type="match status" value="1"/>
</dbReference>
<dbReference type="PROSITE" id="PS51257">
    <property type="entry name" value="PROKAR_LIPOPROTEIN"/>
    <property type="match status" value="1"/>
</dbReference>
<keyword id="KW-1003">Cell membrane</keyword>
<keyword id="KW-0378">Hydrolase</keyword>
<keyword id="KW-0449">Lipoprotein</keyword>
<keyword id="KW-0472">Membrane</keyword>
<keyword id="KW-0479">Metal-binding</keyword>
<keyword id="KW-0482">Metalloprotease</keyword>
<keyword id="KW-0564">Palmitate</keyword>
<keyword id="KW-0645">Protease</keyword>
<keyword id="KW-0732">Signal</keyword>
<keyword id="KW-0862">Zinc</keyword>
<protein>
    <recommendedName>
        <fullName>ToxR-activated gene A lipoprotein</fullName>
        <ecNumber>3.4.24.-</ecNumber>
    </recommendedName>
</protein>
<reference key="1">
    <citation type="submission" date="2007-03" db="EMBL/GenBank/DDBJ databases">
        <authorList>
            <person name="Heidelberg J."/>
        </authorList>
    </citation>
    <scope>NUCLEOTIDE SEQUENCE [LARGE SCALE GENOMIC DNA]</scope>
    <source>
        <strain>ATCC 39541 / Classical Ogawa 395 / O395</strain>
    </source>
</reference>
<reference key="2">
    <citation type="journal article" date="2008" name="PLoS ONE">
        <title>A recalibrated molecular clock and independent origins for the cholera pandemic clones.</title>
        <authorList>
            <person name="Feng L."/>
            <person name="Reeves P.R."/>
            <person name="Lan R."/>
            <person name="Ren Y."/>
            <person name="Gao C."/>
            <person name="Zhou Z."/>
            <person name="Ren Y."/>
            <person name="Cheng J."/>
            <person name="Wang W."/>
            <person name="Wang J."/>
            <person name="Qian W."/>
            <person name="Li D."/>
            <person name="Wang L."/>
        </authorList>
    </citation>
    <scope>NUCLEOTIDE SEQUENCE [LARGE SCALE GENOMIC DNA]</scope>
    <source>
        <strain>ATCC 39541 / Classical Ogawa 395 / O395</strain>
    </source>
</reference>
<reference key="3">
    <citation type="journal article" date="1995" name="Gene">
        <title>Isolation and characterization of a Vibrio cholerae gene (tagA) that encodes a ToxR-regulated lipoprotein.</title>
        <authorList>
            <person name="Harkey C.W."/>
            <person name="Everiss K.D."/>
            <person name="Peterson K.M."/>
        </authorList>
    </citation>
    <scope>NUCLEOTIDE SEQUENCE [GENOMIC DNA] OF 1-576</scope>
</reference>
<proteinExistence type="inferred from homology"/>
<comment type="cofactor">
    <cofactor evidence="1">
        <name>Zn(2+)</name>
        <dbReference type="ChEBI" id="CHEBI:29105"/>
    </cofactor>
    <text evidence="1">Binds 1 zinc ion per subunit.</text>
</comment>
<comment type="subcellular location">
    <subcellularLocation>
        <location evidence="2">Cell membrane</location>
        <topology evidence="2">Lipid-anchor</topology>
    </subcellularLocation>
</comment>
<comment type="sequence caution" evidence="5">
    <conflict type="frameshift">
        <sequence resource="EMBL-CDS" id="AAA68630"/>
    </conflict>
</comment>
<comment type="sequence caution" evidence="5">
    <conflict type="erroneous initiation">
        <sequence resource="EMBL-CDS" id="ABQ22076"/>
    </conflict>
</comment>
<comment type="sequence caution" evidence="5">
    <conflict type="erroneous initiation">
        <sequence resource="EMBL-CDS" id="ACP08853"/>
    </conflict>
</comment>
<organism>
    <name type="scientific">Vibrio cholerae serotype O1 (strain ATCC 39541 / Classical Ogawa 395 / O395)</name>
    <dbReference type="NCBI Taxonomy" id="345073"/>
    <lineage>
        <taxon>Bacteria</taxon>
        <taxon>Pseudomonadati</taxon>
        <taxon>Pseudomonadota</taxon>
        <taxon>Gammaproteobacteria</taxon>
        <taxon>Vibrionales</taxon>
        <taxon>Vibrionaceae</taxon>
        <taxon>Vibrio</taxon>
    </lineage>
</organism>
<accession>A5F398</accession>
<accession>C3LYI7</accession>
<accession>O68335</accession>
<accession>P24019</accession>
<accession>Q56595</accession>
<accession>Q9KTR9</accession>
<evidence type="ECO:0000250" key="1"/>
<evidence type="ECO:0000255" key="2">
    <source>
        <dbReference type="PROSITE-ProRule" id="PRU00303"/>
    </source>
</evidence>
<evidence type="ECO:0000255" key="3">
    <source>
        <dbReference type="PROSITE-ProRule" id="PRU00316"/>
    </source>
</evidence>
<evidence type="ECO:0000256" key="4">
    <source>
        <dbReference type="SAM" id="MobiDB-lite"/>
    </source>
</evidence>
<evidence type="ECO:0000305" key="5"/>
<feature type="signal peptide" evidence="2">
    <location>
        <begin position="1"/>
        <end position="21"/>
    </location>
</feature>
<feature type="chain" id="PRO_0000324809" description="ToxR-activated gene A lipoprotein">
    <location>
        <begin position="22"/>
        <end position="1002"/>
    </location>
</feature>
<feature type="domain" description="Fibronectin type-III" evidence="3">
    <location>
        <begin position="45"/>
        <end position="139"/>
    </location>
</feature>
<feature type="domain" description="Peptidase M66">
    <location>
        <begin position="282"/>
        <end position="536"/>
    </location>
</feature>
<feature type="region of interest" description="Disordered" evidence="4">
    <location>
        <begin position="31"/>
        <end position="53"/>
    </location>
</feature>
<feature type="active site" evidence="1">
    <location>
        <position position="433"/>
    </location>
</feature>
<feature type="binding site" evidence="1">
    <location>
        <position position="432"/>
    </location>
    <ligand>
        <name>Zn(2+)</name>
        <dbReference type="ChEBI" id="CHEBI:29105"/>
        <note>catalytic</note>
    </ligand>
</feature>
<feature type="binding site" evidence="1">
    <location>
        <position position="436"/>
    </location>
    <ligand>
        <name>Zn(2+)</name>
        <dbReference type="ChEBI" id="CHEBI:29105"/>
        <note>catalytic</note>
    </ligand>
</feature>
<feature type="binding site" evidence="1">
    <location>
        <position position="442"/>
    </location>
    <ligand>
        <name>Zn(2+)</name>
        <dbReference type="ChEBI" id="CHEBI:29105"/>
        <note>catalytic</note>
    </ligand>
</feature>
<feature type="lipid moiety-binding region" description="N-palmitoyl cysteine" evidence="2">
    <location>
        <position position="22"/>
    </location>
</feature>
<feature type="lipid moiety-binding region" description="S-diacylglycerol cysteine" evidence="2">
    <location>
        <position position="22"/>
    </location>
</feature>
<gene>
    <name type="primary">tagA</name>
    <name type="ordered locus">VC0395_A0345</name>
    <name type="ordered locus">VC395_0837</name>
</gene>
<sequence>MVVRYSLLMKVSFAILIFLVGCNENATSSNDQYLTDPDISEQTKKPSRPIIDEKNKGVTDTSVTIEWDKIECEKNFSHYNVIVYRKDRIEDVITIRTRNNSVFIDDLKPNSQYSIDVSSCLHSACSESAKIEFITLNEIDYYHTTEIEKNVYGSLEGEVRFVQTHVISPEGRKNEPEIITGRDALILFKPSIKNSSSILMKIYSEDGLTSKVVMKSPSMLPKTDQPIDIDENNKVVSYSNSYWSAEIPWNKMKSGMSLHFEDENGNLGIIESERIKFSAPSELIIQNIDLGMLYKPRGRNIVIKELERTAVDYFQKVPVSKLIFSDYTPIHFEKITLPNGSVYTEKSADIGGWHQGDMREAVGKALVSTGINNANLGIVASSGYSQQYNRLTNHITAHTNIGYYNNGVVVHGGSGGGGIVTLENTLHNEWSHELGHNYGLGHYVAGGTSHGPDTSWGWDGYYKRFIANFDWKRSPQSNIRPDNQEVVKPFMDKYTYLWDAMSGGYDHQNGIISRYTLHHPYVARIIQDWLKNGAVVINNDYMVWDELKNIYVYKGTNFKVPIKKGVPVVTILGVYDPDKINPSQLYPPTYSNYGNIFDLEKPRSESSLKGWQYVKDVNYLDRVNTHWHTMLVNRKEEKICRFSYLSPKGKKFEFLGYEDIENKICTGSRSIHYLEDGKKNPIESKYNDYFLLSIDGDGEISYVPDSTIGESKICSLKMSGTVYGAGFIKGNSCRQIDGVFMNGFQWAFTLNQSGVNSTYTWSNECVLKIKDKDNNIESISIPNYRIEKNQSNKIHLNISREKPIIDINVYCGEHELTSIKVSDNPDIKLLKGPIIVGQEHGYTSYEPKLPSGWFKHYDNFEPKNEINHELGKMRVNDNDEYICRFNFSDSDREMKFVGYVSQLSESKYICTGGSEIYYKKNDINIELSSKENDFEWLSVRDKNLIGSKIEFDNNKTLCVLDNRSFYGAGYLDENNRCTQDRQIHWSNGKQWLFSTYKTMTYH</sequence>
<name>TAGA_VIBC3</name>